<keyword id="KW-0158">Chromosome</keyword>
<keyword id="KW-0227">DNA damage</keyword>
<keyword id="KW-0233">DNA recombination</keyword>
<keyword id="KW-0234">DNA repair</keyword>
<keyword id="KW-0479">Metal-binding</keyword>
<keyword id="KW-0539">Nucleus</keyword>
<keyword id="KW-1185">Reference proteome</keyword>
<keyword id="KW-0779">Telomere</keyword>
<keyword id="KW-0808">Transferase</keyword>
<keyword id="KW-0832">Ubl conjugation</keyword>
<keyword id="KW-0833">Ubl conjugation pathway</keyword>
<keyword id="KW-0862">Zinc</keyword>
<keyword id="KW-0863">Zinc-finger</keyword>
<organism>
    <name type="scientific">Mus musculus</name>
    <name type="common">Mouse</name>
    <dbReference type="NCBI Taxonomy" id="10090"/>
    <lineage>
        <taxon>Eukaryota</taxon>
        <taxon>Metazoa</taxon>
        <taxon>Chordata</taxon>
        <taxon>Craniata</taxon>
        <taxon>Vertebrata</taxon>
        <taxon>Euteleostomi</taxon>
        <taxon>Mammalia</taxon>
        <taxon>Eutheria</taxon>
        <taxon>Euarchontoglires</taxon>
        <taxon>Glires</taxon>
        <taxon>Rodentia</taxon>
        <taxon>Myomorpha</taxon>
        <taxon>Muroidea</taxon>
        <taxon>Muridae</taxon>
        <taxon>Murinae</taxon>
        <taxon>Mus</taxon>
        <taxon>Mus</taxon>
    </lineage>
</organism>
<dbReference type="EC" id="2.3.2.27" evidence="1"/>
<dbReference type="EMBL" id="AK009715">
    <property type="protein sequence ID" value="BAB26459.1"/>
    <property type="molecule type" value="mRNA"/>
</dbReference>
<dbReference type="EMBL" id="AK011011">
    <property type="protein sequence ID" value="BAB27329.1"/>
    <property type="status" value="ALT_INIT"/>
    <property type="molecule type" value="mRNA"/>
</dbReference>
<dbReference type="EMBL" id="AK160217">
    <property type="protein sequence ID" value="BAE35695.1"/>
    <property type="molecule type" value="mRNA"/>
</dbReference>
<dbReference type="EMBL" id="AK166410">
    <property type="protein sequence ID" value="BAE38758.1"/>
    <property type="status" value="ALT_INIT"/>
    <property type="molecule type" value="mRNA"/>
</dbReference>
<dbReference type="EMBL" id="BC031848">
    <property type="protein sequence ID" value="AAH31848.1"/>
    <property type="status" value="ALT_INIT"/>
    <property type="molecule type" value="mRNA"/>
</dbReference>
<dbReference type="EMBL" id="BC049558">
    <property type="protein sequence ID" value="AAH49558.1"/>
    <property type="status" value="ALT_INIT"/>
    <property type="molecule type" value="mRNA"/>
</dbReference>
<dbReference type="RefSeq" id="NP_001363939.1">
    <property type="nucleotide sequence ID" value="NM_001377010.1"/>
</dbReference>
<dbReference type="RefSeq" id="NP_001363940.1">
    <property type="nucleotide sequence ID" value="NM_001377011.1"/>
</dbReference>
<dbReference type="RefSeq" id="NP_001410382.1">
    <property type="nucleotide sequence ID" value="NM_001423453.1"/>
</dbReference>
<dbReference type="RefSeq" id="NP_001410383.1">
    <property type="nucleotide sequence ID" value="NM_001423454.1"/>
</dbReference>
<dbReference type="RefSeq" id="NP_001410384.1">
    <property type="nucleotide sequence ID" value="NM_001423455.1"/>
</dbReference>
<dbReference type="RefSeq" id="NP_080606.2">
    <property type="nucleotide sequence ID" value="NM_026330.3"/>
</dbReference>
<dbReference type="RefSeq" id="XP_006508198.1">
    <property type="nucleotide sequence ID" value="XM_006508135.3"/>
</dbReference>
<dbReference type="RefSeq" id="XP_006508199.1">
    <property type="nucleotide sequence ID" value="XM_006508136.2"/>
</dbReference>
<dbReference type="RefSeq" id="XP_017167758.1">
    <property type="nucleotide sequence ID" value="XM_017312269.1"/>
</dbReference>
<dbReference type="RefSeq" id="XP_036009279.1">
    <property type="nucleotide sequence ID" value="XM_036153386.1"/>
</dbReference>
<dbReference type="RefSeq" id="XP_036009283.1">
    <property type="nucleotide sequence ID" value="XM_036153390.1"/>
</dbReference>
<dbReference type="SMR" id="Q9D720"/>
<dbReference type="BioGRID" id="212386">
    <property type="interactions" value="6"/>
</dbReference>
<dbReference type="FunCoup" id="Q9D720">
    <property type="interactions" value="2049"/>
</dbReference>
<dbReference type="STRING" id="10090.ENSMUSP00000033006"/>
<dbReference type="PhosphoSitePlus" id="Q9D720"/>
<dbReference type="PaxDb" id="10090-ENSMUSP00000033006"/>
<dbReference type="PeptideAtlas" id="Q9D720"/>
<dbReference type="ProteomicsDB" id="293905"/>
<dbReference type="Pumba" id="Q9D720"/>
<dbReference type="DNASU" id="67711"/>
<dbReference type="Ensembl" id="ENSMUST00000033006.15">
    <property type="protein sequence ID" value="ENSMUSP00000033006.9"/>
    <property type="gene ID" value="ENSMUSG00000030750.14"/>
</dbReference>
<dbReference type="GeneID" id="67711"/>
<dbReference type="KEGG" id="mmu:67711"/>
<dbReference type="UCSC" id="uc009jqa.2">
    <property type="organism name" value="mouse"/>
</dbReference>
<dbReference type="AGR" id="MGI:1914961"/>
<dbReference type="CTD" id="197370"/>
<dbReference type="MGI" id="MGI:1914961">
    <property type="gene designation" value="Nsmce1"/>
</dbReference>
<dbReference type="eggNOG" id="KOG4718">
    <property type="taxonomic scope" value="Eukaryota"/>
</dbReference>
<dbReference type="GeneTree" id="ENSGT00390000009084"/>
<dbReference type="InParanoid" id="Q9D720"/>
<dbReference type="OrthoDB" id="185455at2759"/>
<dbReference type="PhylomeDB" id="Q9D720"/>
<dbReference type="TreeFam" id="TF314721"/>
<dbReference type="Reactome" id="R-MMU-3108214">
    <property type="pathway name" value="SUMOylation of DNA damage response and repair proteins"/>
</dbReference>
<dbReference type="BioGRID-ORCS" id="67711">
    <property type="hits" value="23 hits in 114 CRISPR screens"/>
</dbReference>
<dbReference type="ChiTaRS" id="Nsmce1">
    <property type="organism name" value="mouse"/>
</dbReference>
<dbReference type="PRO" id="PR:Q9D720"/>
<dbReference type="Proteomes" id="UP000000589">
    <property type="component" value="Chromosome 7"/>
</dbReference>
<dbReference type="RNAct" id="Q9D720">
    <property type="molecule type" value="protein"/>
</dbReference>
<dbReference type="GO" id="GO:0000775">
    <property type="term" value="C:chromosome, centromeric region"/>
    <property type="evidence" value="ECO:0000314"/>
    <property type="project" value="MGI"/>
</dbReference>
<dbReference type="GO" id="GO:0000781">
    <property type="term" value="C:chromosome, telomeric region"/>
    <property type="evidence" value="ECO:0007669"/>
    <property type="project" value="UniProtKB-SubCell"/>
</dbReference>
<dbReference type="GO" id="GO:0097431">
    <property type="term" value="C:mitotic spindle pole"/>
    <property type="evidence" value="ECO:0000314"/>
    <property type="project" value="MGI"/>
</dbReference>
<dbReference type="GO" id="GO:0005654">
    <property type="term" value="C:nucleoplasm"/>
    <property type="evidence" value="ECO:0007669"/>
    <property type="project" value="Ensembl"/>
</dbReference>
<dbReference type="GO" id="GO:0005634">
    <property type="term" value="C:nucleus"/>
    <property type="evidence" value="ECO:0000314"/>
    <property type="project" value="MGI"/>
</dbReference>
<dbReference type="GO" id="GO:0030915">
    <property type="term" value="C:Smc5-Smc6 complex"/>
    <property type="evidence" value="ECO:0000314"/>
    <property type="project" value="MGI"/>
</dbReference>
<dbReference type="GO" id="GO:0046983">
    <property type="term" value="F:protein dimerization activity"/>
    <property type="evidence" value="ECO:0000250"/>
    <property type="project" value="UniProtKB"/>
</dbReference>
<dbReference type="GO" id="GO:0061630">
    <property type="term" value="F:ubiquitin protein ligase activity"/>
    <property type="evidence" value="ECO:0000250"/>
    <property type="project" value="UniProtKB"/>
</dbReference>
<dbReference type="GO" id="GO:0008270">
    <property type="term" value="F:zinc ion binding"/>
    <property type="evidence" value="ECO:0007669"/>
    <property type="project" value="UniProtKB-KW"/>
</dbReference>
<dbReference type="GO" id="GO:0006974">
    <property type="term" value="P:DNA damage response"/>
    <property type="evidence" value="ECO:0000250"/>
    <property type="project" value="UniProtKB"/>
</dbReference>
<dbReference type="GO" id="GO:0006310">
    <property type="term" value="P:DNA recombination"/>
    <property type="evidence" value="ECO:0007669"/>
    <property type="project" value="UniProtKB-KW"/>
</dbReference>
<dbReference type="GO" id="GO:0006281">
    <property type="term" value="P:DNA repair"/>
    <property type="evidence" value="ECO:0007669"/>
    <property type="project" value="UniProtKB-KW"/>
</dbReference>
<dbReference type="CDD" id="cd16493">
    <property type="entry name" value="RING-CH-C4HC3_NSE1"/>
    <property type="match status" value="1"/>
</dbReference>
<dbReference type="FunFam" id="1.10.10.10:FF:000270">
    <property type="entry name" value="Non-structural maintenance of chromosomes element 1 homolog"/>
    <property type="match status" value="1"/>
</dbReference>
<dbReference type="FunFam" id="3.90.1150.220:FF:000001">
    <property type="entry name" value="Non-structural maintenance of chromosomes element 1 homolog"/>
    <property type="match status" value="1"/>
</dbReference>
<dbReference type="FunFam" id="3.30.40.10:FF:000298">
    <property type="entry name" value="non-structural maintenance of chromosomes element 1 homolog"/>
    <property type="match status" value="1"/>
</dbReference>
<dbReference type="Gene3D" id="3.90.1150.220">
    <property type="match status" value="1"/>
</dbReference>
<dbReference type="Gene3D" id="1.10.10.10">
    <property type="entry name" value="Winged helix-like DNA-binding domain superfamily/Winged helix DNA-binding domain"/>
    <property type="match status" value="1"/>
</dbReference>
<dbReference type="Gene3D" id="3.30.40.10">
    <property type="entry name" value="Zinc/RING finger domain, C3HC4 (zinc finger)"/>
    <property type="match status" value="1"/>
</dbReference>
<dbReference type="InterPro" id="IPR046349">
    <property type="entry name" value="C1-like_sf"/>
</dbReference>
<dbReference type="InterPro" id="IPR011513">
    <property type="entry name" value="Nse1"/>
</dbReference>
<dbReference type="InterPro" id="IPR014857">
    <property type="entry name" value="Nse1_RING_C4HC3-type"/>
</dbReference>
<dbReference type="InterPro" id="IPR002219">
    <property type="entry name" value="PE/DAG-bd"/>
</dbReference>
<dbReference type="InterPro" id="IPR036388">
    <property type="entry name" value="WH-like_DNA-bd_sf"/>
</dbReference>
<dbReference type="InterPro" id="IPR013083">
    <property type="entry name" value="Znf_RING/FYVE/PHD"/>
</dbReference>
<dbReference type="PANTHER" id="PTHR20973">
    <property type="entry name" value="NON-SMC ELEMENT 1-RELATED"/>
    <property type="match status" value="1"/>
</dbReference>
<dbReference type="PANTHER" id="PTHR20973:SF0">
    <property type="entry name" value="NON-STRUCTURAL MAINTENANCE OF CHROMOSOMES ELEMENT 1 HOMOLOG"/>
    <property type="match status" value="1"/>
</dbReference>
<dbReference type="Pfam" id="PF07574">
    <property type="entry name" value="SMC_Nse1"/>
    <property type="match status" value="1"/>
</dbReference>
<dbReference type="Pfam" id="PF08746">
    <property type="entry name" value="zf-RING-like"/>
    <property type="match status" value="1"/>
</dbReference>
<dbReference type="SUPFAM" id="SSF57889">
    <property type="entry name" value="Cysteine-rich domain"/>
    <property type="match status" value="1"/>
</dbReference>
<gene>
    <name type="primary">Nsmce1</name>
</gene>
<protein>
    <recommendedName>
        <fullName>Non-structural maintenance of chromosomes element 1 homolog</fullName>
        <shortName>Non-SMC element 1 homolog</shortName>
        <ecNumber evidence="1">2.3.2.27</ecNumber>
    </recommendedName>
</protein>
<name>NSE1_MOUSE</name>
<reference key="1">
    <citation type="journal article" date="2005" name="Science">
        <title>The transcriptional landscape of the mammalian genome.</title>
        <authorList>
            <person name="Carninci P."/>
            <person name="Kasukawa T."/>
            <person name="Katayama S."/>
            <person name="Gough J."/>
            <person name="Frith M.C."/>
            <person name="Maeda N."/>
            <person name="Oyama R."/>
            <person name="Ravasi T."/>
            <person name="Lenhard B."/>
            <person name="Wells C."/>
            <person name="Kodzius R."/>
            <person name="Shimokawa K."/>
            <person name="Bajic V.B."/>
            <person name="Brenner S.E."/>
            <person name="Batalov S."/>
            <person name="Forrest A.R."/>
            <person name="Zavolan M."/>
            <person name="Davis M.J."/>
            <person name="Wilming L.G."/>
            <person name="Aidinis V."/>
            <person name="Allen J.E."/>
            <person name="Ambesi-Impiombato A."/>
            <person name="Apweiler R."/>
            <person name="Aturaliya R.N."/>
            <person name="Bailey T.L."/>
            <person name="Bansal M."/>
            <person name="Baxter L."/>
            <person name="Beisel K.W."/>
            <person name="Bersano T."/>
            <person name="Bono H."/>
            <person name="Chalk A.M."/>
            <person name="Chiu K.P."/>
            <person name="Choudhary V."/>
            <person name="Christoffels A."/>
            <person name="Clutterbuck D.R."/>
            <person name="Crowe M.L."/>
            <person name="Dalla E."/>
            <person name="Dalrymple B.P."/>
            <person name="de Bono B."/>
            <person name="Della Gatta G."/>
            <person name="di Bernardo D."/>
            <person name="Down T."/>
            <person name="Engstrom P."/>
            <person name="Fagiolini M."/>
            <person name="Faulkner G."/>
            <person name="Fletcher C.F."/>
            <person name="Fukushima T."/>
            <person name="Furuno M."/>
            <person name="Futaki S."/>
            <person name="Gariboldi M."/>
            <person name="Georgii-Hemming P."/>
            <person name="Gingeras T.R."/>
            <person name="Gojobori T."/>
            <person name="Green R.E."/>
            <person name="Gustincich S."/>
            <person name="Harbers M."/>
            <person name="Hayashi Y."/>
            <person name="Hensch T.K."/>
            <person name="Hirokawa N."/>
            <person name="Hill D."/>
            <person name="Huminiecki L."/>
            <person name="Iacono M."/>
            <person name="Ikeo K."/>
            <person name="Iwama A."/>
            <person name="Ishikawa T."/>
            <person name="Jakt M."/>
            <person name="Kanapin A."/>
            <person name="Katoh M."/>
            <person name="Kawasawa Y."/>
            <person name="Kelso J."/>
            <person name="Kitamura H."/>
            <person name="Kitano H."/>
            <person name="Kollias G."/>
            <person name="Krishnan S.P."/>
            <person name="Kruger A."/>
            <person name="Kummerfeld S.K."/>
            <person name="Kurochkin I.V."/>
            <person name="Lareau L.F."/>
            <person name="Lazarevic D."/>
            <person name="Lipovich L."/>
            <person name="Liu J."/>
            <person name="Liuni S."/>
            <person name="McWilliam S."/>
            <person name="Madan Babu M."/>
            <person name="Madera M."/>
            <person name="Marchionni L."/>
            <person name="Matsuda H."/>
            <person name="Matsuzawa S."/>
            <person name="Miki H."/>
            <person name="Mignone F."/>
            <person name="Miyake S."/>
            <person name="Morris K."/>
            <person name="Mottagui-Tabar S."/>
            <person name="Mulder N."/>
            <person name="Nakano N."/>
            <person name="Nakauchi H."/>
            <person name="Ng P."/>
            <person name="Nilsson R."/>
            <person name="Nishiguchi S."/>
            <person name="Nishikawa S."/>
            <person name="Nori F."/>
            <person name="Ohara O."/>
            <person name="Okazaki Y."/>
            <person name="Orlando V."/>
            <person name="Pang K.C."/>
            <person name="Pavan W.J."/>
            <person name="Pavesi G."/>
            <person name="Pesole G."/>
            <person name="Petrovsky N."/>
            <person name="Piazza S."/>
            <person name="Reed J."/>
            <person name="Reid J.F."/>
            <person name="Ring B.Z."/>
            <person name="Ringwald M."/>
            <person name="Rost B."/>
            <person name="Ruan Y."/>
            <person name="Salzberg S.L."/>
            <person name="Sandelin A."/>
            <person name="Schneider C."/>
            <person name="Schoenbach C."/>
            <person name="Sekiguchi K."/>
            <person name="Semple C.A."/>
            <person name="Seno S."/>
            <person name="Sessa L."/>
            <person name="Sheng Y."/>
            <person name="Shibata Y."/>
            <person name="Shimada H."/>
            <person name="Shimada K."/>
            <person name="Silva D."/>
            <person name="Sinclair B."/>
            <person name="Sperling S."/>
            <person name="Stupka E."/>
            <person name="Sugiura K."/>
            <person name="Sultana R."/>
            <person name="Takenaka Y."/>
            <person name="Taki K."/>
            <person name="Tammoja K."/>
            <person name="Tan S.L."/>
            <person name="Tang S."/>
            <person name="Taylor M.S."/>
            <person name="Tegner J."/>
            <person name="Teichmann S.A."/>
            <person name="Ueda H.R."/>
            <person name="van Nimwegen E."/>
            <person name="Verardo R."/>
            <person name="Wei C.L."/>
            <person name="Yagi K."/>
            <person name="Yamanishi H."/>
            <person name="Zabarovsky E."/>
            <person name="Zhu S."/>
            <person name="Zimmer A."/>
            <person name="Hide W."/>
            <person name="Bult C."/>
            <person name="Grimmond S.M."/>
            <person name="Teasdale R.D."/>
            <person name="Liu E.T."/>
            <person name="Brusic V."/>
            <person name="Quackenbush J."/>
            <person name="Wahlestedt C."/>
            <person name="Mattick J.S."/>
            <person name="Hume D.A."/>
            <person name="Kai C."/>
            <person name="Sasaki D."/>
            <person name="Tomaru Y."/>
            <person name="Fukuda S."/>
            <person name="Kanamori-Katayama M."/>
            <person name="Suzuki M."/>
            <person name="Aoki J."/>
            <person name="Arakawa T."/>
            <person name="Iida J."/>
            <person name="Imamura K."/>
            <person name="Itoh M."/>
            <person name="Kato T."/>
            <person name="Kawaji H."/>
            <person name="Kawagashira N."/>
            <person name="Kawashima T."/>
            <person name="Kojima M."/>
            <person name="Kondo S."/>
            <person name="Konno H."/>
            <person name="Nakano K."/>
            <person name="Ninomiya N."/>
            <person name="Nishio T."/>
            <person name="Okada M."/>
            <person name="Plessy C."/>
            <person name="Shibata K."/>
            <person name="Shiraki T."/>
            <person name="Suzuki S."/>
            <person name="Tagami M."/>
            <person name="Waki K."/>
            <person name="Watahiki A."/>
            <person name="Okamura-Oho Y."/>
            <person name="Suzuki H."/>
            <person name="Kawai J."/>
            <person name="Hayashizaki Y."/>
        </authorList>
    </citation>
    <scope>NUCLEOTIDE SEQUENCE [LARGE SCALE MRNA]</scope>
    <source>
        <strain>C57BL/6J</strain>
        <tissue>Liver</tissue>
        <tissue>Mammary gland</tissue>
        <tissue>Tongue</tissue>
    </source>
</reference>
<reference key="2">
    <citation type="journal article" date="2004" name="Genome Res.">
        <title>The status, quality, and expansion of the NIH full-length cDNA project: the Mammalian Gene Collection (MGC).</title>
        <authorList>
            <consortium name="The MGC Project Team"/>
        </authorList>
    </citation>
    <scope>NUCLEOTIDE SEQUENCE [LARGE SCALE MRNA]</scope>
    <source>
        <strain>Czech II</strain>
        <tissue>Mammary tumor</tissue>
        <tissue>Testis</tissue>
    </source>
</reference>
<reference key="3">
    <citation type="journal article" date="2010" name="Cell">
        <title>A tissue-specific atlas of mouse protein phosphorylation and expression.</title>
        <authorList>
            <person name="Huttlin E.L."/>
            <person name="Jedrychowski M.P."/>
            <person name="Elias J.E."/>
            <person name="Goswami T."/>
            <person name="Rad R."/>
            <person name="Beausoleil S.A."/>
            <person name="Villen J."/>
            <person name="Haas W."/>
            <person name="Sowa M.E."/>
            <person name="Gygi S.P."/>
        </authorList>
    </citation>
    <scope>IDENTIFICATION BY MASS SPECTROMETRY [LARGE SCALE ANALYSIS]</scope>
    <source>
        <tissue>Spleen</tissue>
        <tissue>Testis</tissue>
    </source>
</reference>
<comment type="function">
    <text evidence="1">RING-type zinc finger-containing E3 ubiquitin ligase that assembles with melanoma antigen protein (MAGE) to catalyze the direct transfer of ubiquitin from E2 ubiquitin-conjugating enzyme to a specific substrate. Within MAGE-RING ubiquitin ligase complex, MAGE stimulates and specifies ubiquitin ligase activity likely through recruitment and/or stabilization of the E2 ubiquitin-conjugating enzyme at the E3:substrate complex. Involved in maintenance of genome integrity, DNA damage response and DNA repair. NSMCE3/MAGEG1 and NSMCE1 ubiquitin ligase are components of SMC5-SMC6 complex and may positively regulate homologous recombination-mediated DNA repair.</text>
</comment>
<comment type="catalytic activity">
    <reaction evidence="1">
        <text>S-ubiquitinyl-[E2 ubiquitin-conjugating enzyme]-L-cysteine + [acceptor protein]-L-lysine = [E2 ubiquitin-conjugating enzyme]-L-cysteine + N(6)-ubiquitinyl-[acceptor protein]-L-lysine.</text>
        <dbReference type="EC" id="2.3.2.27"/>
    </reaction>
</comment>
<comment type="subunit">
    <text evidence="1">Component of the SMC5-SMC6 complex which consists at least of SMC5, SMC6, NSMCE2, NSMCE1, NSMCE4A or EID3 and NSMCE3. NSMCE1, NSMCE4A or EID3 and NSMCE3 probably form a subcomplex that bridges the head domains of the SMC5-SMC6 heterodimer. Interacts with NSMCE3.</text>
</comment>
<comment type="subcellular location">
    <subcellularLocation>
        <location evidence="1">Nucleus</location>
    </subcellularLocation>
    <subcellularLocation>
        <location evidence="1">Chromosome</location>
        <location evidence="1">Telomere</location>
    </subcellularLocation>
</comment>
<comment type="PTM">
    <text evidence="1">Ubiquitinated.</text>
</comment>
<comment type="similarity">
    <text evidence="4">Belongs to the NSE1 family.</text>
</comment>
<comment type="sequence caution" evidence="4">
    <conflict type="erroneous initiation">
        <sequence resource="EMBL-CDS" id="AAH31848"/>
    </conflict>
    <text>Extended N-terminus.</text>
</comment>
<comment type="sequence caution" evidence="4">
    <conflict type="erroneous initiation">
        <sequence resource="EMBL-CDS" id="AAH49558"/>
    </conflict>
    <text>Extended N-terminus.</text>
</comment>
<comment type="sequence caution" evidence="4">
    <conflict type="erroneous initiation">
        <sequence resource="EMBL-CDS" id="BAB27329"/>
    </conflict>
    <text>Extended N-terminus.</text>
</comment>
<comment type="sequence caution" evidence="4">
    <conflict type="erroneous initiation">
        <sequence resource="EMBL-CDS" id="BAE38758"/>
    </conflict>
    <text>Extended N-terminus.</text>
</comment>
<accession>Q9D720</accession>
<accession>Q3TLN4</accession>
<accession>Q8K2B4</accession>
<accession>Q9CY20</accession>
<feature type="chain" id="PRO_0000270945" description="Non-structural maintenance of chromosomes element 1 homolog">
    <location>
        <begin position="1"/>
        <end position="266"/>
    </location>
</feature>
<feature type="zinc finger region" description="RING-type; atypical" evidence="2">
    <location>
        <begin position="191"/>
        <end position="232"/>
    </location>
</feature>
<feature type="region of interest" description="Interaction with NSMCE3" evidence="1">
    <location>
        <begin position="1"/>
        <end position="102"/>
    </location>
</feature>
<feature type="region of interest" description="Disordered" evidence="3">
    <location>
        <begin position="246"/>
        <end position="266"/>
    </location>
</feature>
<feature type="compositionally biased region" description="Basic residues" evidence="3">
    <location>
        <begin position="256"/>
        <end position="266"/>
    </location>
</feature>
<feature type="sequence conflict" description="In Ref. 1; BAB27329." evidence="4" ref="1">
    <original>S</original>
    <variation>F</variation>
    <location>
        <position position="187"/>
    </location>
</feature>
<evidence type="ECO:0000250" key="1">
    <source>
        <dbReference type="UniProtKB" id="Q8WV22"/>
    </source>
</evidence>
<evidence type="ECO:0000255" key="2">
    <source>
        <dbReference type="PROSITE-ProRule" id="PRU00175"/>
    </source>
</evidence>
<evidence type="ECO:0000256" key="3">
    <source>
        <dbReference type="SAM" id="MobiDB-lite"/>
    </source>
</evidence>
<evidence type="ECO:0000305" key="4"/>
<proteinExistence type="evidence at protein level"/>
<sequence length="266" mass="30708">MQGSTRRAGAMTDVHRRFLQLLMTHGVLEEWEVRRLQNHCYQVHDRNATVDKLEDFINNINSVLESLYIEIKKGVTEDDGRPIYALVNLATTSVSKMATDFAENELDLFRKALELIVDSETGFASSTNILNLVDQLKGKKMRKKEAEQVLQKFVQSKWLIEKEGEFTLHGRAILEMEQFIRESYPDSVKMCNICHGLLIQGQSCETCGIRMHLPCVAKYFQSIPEPHCPHCNDYWPHDIPEVYNPEKEREAGISKSSRKSLRTRQH</sequence>